<organism>
    <name type="scientific">Schizosaccharomyces pombe (strain 972 / ATCC 24843)</name>
    <name type="common">Fission yeast</name>
    <dbReference type="NCBI Taxonomy" id="284812"/>
    <lineage>
        <taxon>Eukaryota</taxon>
        <taxon>Fungi</taxon>
        <taxon>Dikarya</taxon>
        <taxon>Ascomycota</taxon>
        <taxon>Taphrinomycotina</taxon>
        <taxon>Schizosaccharomycetes</taxon>
        <taxon>Schizosaccharomycetales</taxon>
        <taxon>Schizosaccharomycetaceae</taxon>
        <taxon>Schizosaccharomyces</taxon>
    </lineage>
</organism>
<reference key="1">
    <citation type="journal article" date="2002" name="Nature">
        <title>The genome sequence of Schizosaccharomyces pombe.</title>
        <authorList>
            <person name="Wood V."/>
            <person name="Gwilliam R."/>
            <person name="Rajandream M.A."/>
            <person name="Lyne M.H."/>
            <person name="Lyne R."/>
            <person name="Stewart A."/>
            <person name="Sgouros J.G."/>
            <person name="Peat N."/>
            <person name="Hayles J."/>
            <person name="Baker S.G."/>
            <person name="Basham D."/>
            <person name="Bowman S."/>
            <person name="Brooks K."/>
            <person name="Brown D."/>
            <person name="Brown S."/>
            <person name="Chillingworth T."/>
            <person name="Churcher C.M."/>
            <person name="Collins M."/>
            <person name="Connor R."/>
            <person name="Cronin A."/>
            <person name="Davis P."/>
            <person name="Feltwell T."/>
            <person name="Fraser A."/>
            <person name="Gentles S."/>
            <person name="Goble A."/>
            <person name="Hamlin N."/>
            <person name="Harris D.E."/>
            <person name="Hidalgo J."/>
            <person name="Hodgson G."/>
            <person name="Holroyd S."/>
            <person name="Hornsby T."/>
            <person name="Howarth S."/>
            <person name="Huckle E.J."/>
            <person name="Hunt S."/>
            <person name="Jagels K."/>
            <person name="James K.D."/>
            <person name="Jones L."/>
            <person name="Jones M."/>
            <person name="Leather S."/>
            <person name="McDonald S."/>
            <person name="McLean J."/>
            <person name="Mooney P."/>
            <person name="Moule S."/>
            <person name="Mungall K.L."/>
            <person name="Murphy L.D."/>
            <person name="Niblett D."/>
            <person name="Odell C."/>
            <person name="Oliver K."/>
            <person name="O'Neil S."/>
            <person name="Pearson D."/>
            <person name="Quail M.A."/>
            <person name="Rabbinowitsch E."/>
            <person name="Rutherford K.M."/>
            <person name="Rutter S."/>
            <person name="Saunders D."/>
            <person name="Seeger K."/>
            <person name="Sharp S."/>
            <person name="Skelton J."/>
            <person name="Simmonds M.N."/>
            <person name="Squares R."/>
            <person name="Squares S."/>
            <person name="Stevens K."/>
            <person name="Taylor K."/>
            <person name="Taylor R.G."/>
            <person name="Tivey A."/>
            <person name="Walsh S.V."/>
            <person name="Warren T."/>
            <person name="Whitehead S."/>
            <person name="Woodward J.R."/>
            <person name="Volckaert G."/>
            <person name="Aert R."/>
            <person name="Robben J."/>
            <person name="Grymonprez B."/>
            <person name="Weltjens I."/>
            <person name="Vanstreels E."/>
            <person name="Rieger M."/>
            <person name="Schaefer M."/>
            <person name="Mueller-Auer S."/>
            <person name="Gabel C."/>
            <person name="Fuchs M."/>
            <person name="Duesterhoeft A."/>
            <person name="Fritzc C."/>
            <person name="Holzer E."/>
            <person name="Moestl D."/>
            <person name="Hilbert H."/>
            <person name="Borzym K."/>
            <person name="Langer I."/>
            <person name="Beck A."/>
            <person name="Lehrach H."/>
            <person name="Reinhardt R."/>
            <person name="Pohl T.M."/>
            <person name="Eger P."/>
            <person name="Zimmermann W."/>
            <person name="Wedler H."/>
            <person name="Wambutt R."/>
            <person name="Purnelle B."/>
            <person name="Goffeau A."/>
            <person name="Cadieu E."/>
            <person name="Dreano S."/>
            <person name="Gloux S."/>
            <person name="Lelaure V."/>
            <person name="Mottier S."/>
            <person name="Galibert F."/>
            <person name="Aves S.J."/>
            <person name="Xiang Z."/>
            <person name="Hunt C."/>
            <person name="Moore K."/>
            <person name="Hurst S.M."/>
            <person name="Lucas M."/>
            <person name="Rochet M."/>
            <person name="Gaillardin C."/>
            <person name="Tallada V.A."/>
            <person name="Garzon A."/>
            <person name="Thode G."/>
            <person name="Daga R.R."/>
            <person name="Cruzado L."/>
            <person name="Jimenez J."/>
            <person name="Sanchez M."/>
            <person name="del Rey F."/>
            <person name="Benito J."/>
            <person name="Dominguez A."/>
            <person name="Revuelta J.L."/>
            <person name="Moreno S."/>
            <person name="Armstrong J."/>
            <person name="Forsburg S.L."/>
            <person name="Cerutti L."/>
            <person name="Lowe T."/>
            <person name="McCombie W.R."/>
            <person name="Paulsen I."/>
            <person name="Potashkin J."/>
            <person name="Shpakovski G.V."/>
            <person name="Ussery D."/>
            <person name="Barrell B.G."/>
            <person name="Nurse P."/>
        </authorList>
    </citation>
    <scope>NUCLEOTIDE SEQUENCE [LARGE SCALE GENOMIC DNA]</scope>
    <source>
        <strain>972 / ATCC 24843</strain>
    </source>
</reference>
<reference key="2">
    <citation type="journal article" date="2011" name="Science">
        <title>Comparative functional genomics of the fission yeasts.</title>
        <authorList>
            <person name="Rhind N."/>
            <person name="Chen Z."/>
            <person name="Yassour M."/>
            <person name="Thompson D.A."/>
            <person name="Haas B.J."/>
            <person name="Habib N."/>
            <person name="Wapinski I."/>
            <person name="Roy S."/>
            <person name="Lin M.F."/>
            <person name="Heiman D.I."/>
            <person name="Young S.K."/>
            <person name="Furuya K."/>
            <person name="Guo Y."/>
            <person name="Pidoux A."/>
            <person name="Chen H.M."/>
            <person name="Robbertse B."/>
            <person name="Goldberg J.M."/>
            <person name="Aoki K."/>
            <person name="Bayne E.H."/>
            <person name="Berlin A.M."/>
            <person name="Desjardins C.A."/>
            <person name="Dobbs E."/>
            <person name="Dukaj L."/>
            <person name="Fan L."/>
            <person name="FitzGerald M.G."/>
            <person name="French C."/>
            <person name="Gujja S."/>
            <person name="Hansen K."/>
            <person name="Keifenheim D."/>
            <person name="Levin J.Z."/>
            <person name="Mosher R.A."/>
            <person name="Mueller C.A."/>
            <person name="Pfiffner J."/>
            <person name="Priest M."/>
            <person name="Russ C."/>
            <person name="Smialowska A."/>
            <person name="Swoboda P."/>
            <person name="Sykes S.M."/>
            <person name="Vaughn M."/>
            <person name="Vengrova S."/>
            <person name="Yoder R."/>
            <person name="Zeng Q."/>
            <person name="Allshire R."/>
            <person name="Baulcombe D."/>
            <person name="Birren B.W."/>
            <person name="Brown W."/>
            <person name="Ekwall K."/>
            <person name="Kellis M."/>
            <person name="Leatherwood J."/>
            <person name="Levin H."/>
            <person name="Margalit H."/>
            <person name="Martienssen R."/>
            <person name="Nieduszynski C.A."/>
            <person name="Spatafora J.W."/>
            <person name="Friedman N."/>
            <person name="Dalgaard J.Z."/>
            <person name="Baumann P."/>
            <person name="Niki H."/>
            <person name="Regev A."/>
            <person name="Nusbaum C."/>
        </authorList>
    </citation>
    <scope>IDENTIFICATION</scope>
</reference>
<proteinExistence type="predicted"/>
<gene>
    <name type="ORF">SPCPB16A4.07</name>
</gene>
<accession>G2TRU3</accession>
<keyword id="KW-1185">Reference proteome</keyword>
<name>YJO7_SCHPO</name>
<evidence type="ECO:0000256" key="1">
    <source>
        <dbReference type="SAM" id="MobiDB-lite"/>
    </source>
</evidence>
<feature type="chain" id="PRO_0000416643" description="Uncharacterized protein PB16A4.07">
    <location>
        <begin position="1"/>
        <end position="69"/>
    </location>
</feature>
<feature type="region of interest" description="Disordered" evidence="1">
    <location>
        <begin position="1"/>
        <end position="32"/>
    </location>
</feature>
<feature type="region of interest" description="Disordered" evidence="1">
    <location>
        <begin position="44"/>
        <end position="69"/>
    </location>
</feature>
<feature type="compositionally biased region" description="Basic and acidic residues" evidence="1">
    <location>
        <begin position="7"/>
        <end position="32"/>
    </location>
</feature>
<feature type="compositionally biased region" description="Basic and acidic residues" evidence="1">
    <location>
        <begin position="46"/>
        <end position="69"/>
    </location>
</feature>
<dbReference type="EMBL" id="CU329672">
    <property type="protein sequence ID" value="CCD31393.1"/>
    <property type="molecule type" value="Genomic_DNA"/>
</dbReference>
<dbReference type="RefSeq" id="XP_004001746.1">
    <property type="nucleotide sequence ID" value="XM_004001697.1"/>
</dbReference>
<dbReference type="SMR" id="G2TRU3"/>
<dbReference type="STRING" id="284812.G2TRU3"/>
<dbReference type="iPTMnet" id="G2TRU3"/>
<dbReference type="PaxDb" id="4896-SPCPB16A4.07.1"/>
<dbReference type="EnsemblFungi" id="SPCPB16A4.07.1">
    <property type="protein sequence ID" value="SPCPB16A4.07.1:pep"/>
    <property type="gene ID" value="SPCPB16A4.07"/>
</dbReference>
<dbReference type="PomBase" id="SPCPB16A4.07"/>
<dbReference type="VEuPathDB" id="FungiDB:SPCPB16A4.07"/>
<dbReference type="HOGENOM" id="CLU_2777384_0_0_1"/>
<dbReference type="InParanoid" id="G2TRU3"/>
<dbReference type="OMA" id="MSPAPYK"/>
<dbReference type="PRO" id="PR:G2TRU3"/>
<dbReference type="Proteomes" id="UP000002485">
    <property type="component" value="Chromosome III"/>
</dbReference>
<protein>
    <recommendedName>
        <fullName>Uncharacterized protein PB16A4.07</fullName>
    </recommendedName>
</protein>
<sequence length="69" mass="8036">MSAPYKNLDRDTKHTHPKLNETERNLNRGWGDVKKEELYEDLAQSDADKQLAEDKMETKYEKSKPAPSD</sequence>